<evidence type="ECO:0000255" key="1">
    <source>
        <dbReference type="HAMAP-Rule" id="MF_01373"/>
    </source>
</evidence>
<keyword id="KW-1003">Cell membrane</keyword>
<keyword id="KW-0449">Lipoprotein</keyword>
<keyword id="KW-0472">Membrane</keyword>
<keyword id="KW-0564">Palmitate</keyword>
<keyword id="KW-1185">Reference proteome</keyword>
<keyword id="KW-0732">Signal</keyword>
<protein>
    <recommendedName>
        <fullName evidence="1">Lipoprotein LpqB</fullName>
    </recommendedName>
</protein>
<organism>
    <name type="scientific">Corynebacterium diphtheriae (strain ATCC 700971 / NCTC 13129 / Biotype gravis)</name>
    <dbReference type="NCBI Taxonomy" id="257309"/>
    <lineage>
        <taxon>Bacteria</taxon>
        <taxon>Bacillati</taxon>
        <taxon>Actinomycetota</taxon>
        <taxon>Actinomycetes</taxon>
        <taxon>Mycobacteriales</taxon>
        <taxon>Corynebacteriaceae</taxon>
        <taxon>Corynebacterium</taxon>
    </lineage>
</organism>
<sequence length="581" mass="62851">MRNHVSRYLTALIAVGCAATTAACTSLPSNSEPQALRSFEASASEEPQGPVEDQEPDLLLRDFYEANNNPQQRYSLARRYLTHRASQSWNPAPETLVLDGIEINSAADSSTKNRRYDVRGLIVGSIGEGGEYRPRNERYSTTIGLEKVDGQWRISTLPDQIVVQRNELWNHYRQKQVYFFDTSGTTLVADRRWIFQEKMGHNDNHESALLSLILTGPSKSLAPGVVNEVPSGAAYAGYHDDYYQFTGLSSLDEDSLKRLTAQSVWTLALAEVPGPYRFKFDGATMKSPINGSEDLTVDDFAEYNPLPQQAVDSGLYAFNSNGVKKLNQGVATPTTGTLGNTHNIESMAVSAKTGATAAVRTAVEGDAKTSTLMLGPIGGQFVDVLKARRLTSPSFELSSSSLWVVKDSDQVVRLSRSSENEGIVETVVDTSELGSLGKNISALQLSRSGVRAAFIVDGSVYTATVARPNPGQRKLVNVQEIIPSLANVAQSLAWQPNGSLIIGTSKPDAPVWIVAQDGSLGSKLSAGNIVAPVMNVAASQSTLYISDARAALELPNSDTSTTYWREVQGLEGSRSVLVVPR</sequence>
<feature type="signal peptide" evidence="1">
    <location>
        <begin position="1"/>
        <end position="23"/>
    </location>
</feature>
<feature type="chain" id="PRO_0000286714" description="Lipoprotein LpqB">
    <location>
        <begin position="24"/>
        <end position="581"/>
    </location>
</feature>
<feature type="lipid moiety-binding region" description="N-palmitoyl cysteine" evidence="1">
    <location>
        <position position="24"/>
    </location>
</feature>
<feature type="lipid moiety-binding region" description="S-diacylglycerol cysteine" evidence="1">
    <location>
        <position position="24"/>
    </location>
</feature>
<gene>
    <name evidence="1" type="primary">lpqB</name>
    <name type="ordered locus">DIP0696</name>
</gene>
<reference key="1">
    <citation type="journal article" date="2003" name="Nucleic Acids Res.">
        <title>The complete genome sequence and analysis of Corynebacterium diphtheriae NCTC13129.</title>
        <authorList>
            <person name="Cerdeno-Tarraga A.-M."/>
            <person name="Efstratiou A."/>
            <person name="Dover L.G."/>
            <person name="Holden M.T.G."/>
            <person name="Pallen M.J."/>
            <person name="Bentley S.D."/>
            <person name="Besra G.S."/>
            <person name="Churcher C.M."/>
            <person name="James K.D."/>
            <person name="De Zoysa A."/>
            <person name="Chillingworth T."/>
            <person name="Cronin A."/>
            <person name="Dowd L."/>
            <person name="Feltwell T."/>
            <person name="Hamlin N."/>
            <person name="Holroyd S."/>
            <person name="Jagels K."/>
            <person name="Moule S."/>
            <person name="Quail M.A."/>
            <person name="Rabbinowitsch E."/>
            <person name="Rutherford K.M."/>
            <person name="Thomson N.R."/>
            <person name="Unwin L."/>
            <person name="Whitehead S."/>
            <person name="Barrell B.G."/>
            <person name="Parkhill J."/>
        </authorList>
    </citation>
    <scope>NUCLEOTIDE SEQUENCE [LARGE SCALE GENOMIC DNA]</scope>
    <source>
        <strain>ATCC 700971 / NCTC 13129 / Biotype gravis</strain>
    </source>
</reference>
<comment type="subcellular location">
    <subcellularLocation>
        <location evidence="1">Cell membrane</location>
        <topology evidence="1">Lipid-anchor</topology>
    </subcellularLocation>
</comment>
<comment type="similarity">
    <text evidence="1">Belongs to the LpqB lipoprotein family.</text>
</comment>
<accession>Q6NIS1</accession>
<dbReference type="EMBL" id="BX248355">
    <property type="protein sequence ID" value="CAE49213.1"/>
    <property type="molecule type" value="Genomic_DNA"/>
</dbReference>
<dbReference type="RefSeq" id="WP_004567102.1">
    <property type="nucleotide sequence ID" value="NC_002935.2"/>
</dbReference>
<dbReference type="SMR" id="Q6NIS1"/>
<dbReference type="STRING" id="257309.DIP0696"/>
<dbReference type="KEGG" id="cdi:DIP0696"/>
<dbReference type="HOGENOM" id="CLU_032207_1_0_11"/>
<dbReference type="Proteomes" id="UP000002198">
    <property type="component" value="Chromosome"/>
</dbReference>
<dbReference type="GO" id="GO:0005886">
    <property type="term" value="C:plasma membrane"/>
    <property type="evidence" value="ECO:0007669"/>
    <property type="project" value="UniProtKB-SubCell"/>
</dbReference>
<dbReference type="HAMAP" id="MF_01373">
    <property type="entry name" value="LpqB_lipoprot"/>
    <property type="match status" value="1"/>
</dbReference>
<dbReference type="InterPro" id="IPR019606">
    <property type="entry name" value="GerMN"/>
</dbReference>
<dbReference type="InterPro" id="IPR023959">
    <property type="entry name" value="Lipoprotein_LpqB"/>
</dbReference>
<dbReference type="InterPro" id="IPR018910">
    <property type="entry name" value="Lipoprotein_LpqB_C"/>
</dbReference>
<dbReference type="NCBIfam" id="NF010141">
    <property type="entry name" value="PRK13616.1"/>
    <property type="match status" value="1"/>
</dbReference>
<dbReference type="Pfam" id="PF10646">
    <property type="entry name" value="Germane"/>
    <property type="match status" value="1"/>
</dbReference>
<dbReference type="Pfam" id="PF10647">
    <property type="entry name" value="Gmad1"/>
    <property type="match status" value="1"/>
</dbReference>
<dbReference type="SMART" id="SM00909">
    <property type="entry name" value="Germane"/>
    <property type="match status" value="1"/>
</dbReference>
<dbReference type="PROSITE" id="PS51257">
    <property type="entry name" value="PROKAR_LIPOPROTEIN"/>
    <property type="match status" value="1"/>
</dbReference>
<proteinExistence type="inferred from homology"/>
<name>LPQB_CORDI</name>